<accession>Q2YSI3</accession>
<comment type="catalytic activity">
    <reaction evidence="1">
        <text>L-histidinol phosphate + 2-oxoglutarate = 3-(imidazol-4-yl)-2-oxopropyl phosphate + L-glutamate</text>
        <dbReference type="Rhea" id="RHEA:23744"/>
        <dbReference type="ChEBI" id="CHEBI:16810"/>
        <dbReference type="ChEBI" id="CHEBI:29985"/>
        <dbReference type="ChEBI" id="CHEBI:57766"/>
        <dbReference type="ChEBI" id="CHEBI:57980"/>
        <dbReference type="EC" id="2.6.1.9"/>
    </reaction>
</comment>
<comment type="cofactor">
    <cofactor evidence="1">
        <name>pyridoxal 5'-phosphate</name>
        <dbReference type="ChEBI" id="CHEBI:597326"/>
    </cofactor>
</comment>
<comment type="pathway">
    <text evidence="1">Amino-acid biosynthesis; L-histidine biosynthesis; L-histidine from 5-phospho-alpha-D-ribose 1-diphosphate: step 7/9.</text>
</comment>
<comment type="subunit">
    <text evidence="1">Homodimer.</text>
</comment>
<comment type="similarity">
    <text evidence="1">Belongs to the class-II pyridoxal-phosphate-dependent aminotransferase family. Histidinol-phosphate aminotransferase subfamily.</text>
</comment>
<protein>
    <recommendedName>
        <fullName evidence="1">Histidinol-phosphate aminotransferase</fullName>
        <ecNumber evidence="1">2.6.1.9</ecNumber>
    </recommendedName>
    <alternativeName>
        <fullName evidence="1">Imidazole acetol-phosphate transaminase</fullName>
    </alternativeName>
</protein>
<sequence length="352" mass="39760">MKEQLNQLSAYQPGLSPRALKEKYGIEGDLYKLASNENLYGPSPKVKEAISAHLDELYYYPETGSPTLKAAISKHLNVDQSRILFGAGLDEVILMISRAVLTPGDTIVTSEATFGQYYHNAIVESANVIQVPLKDGGFDLEGILKQVNEDTSLVWLCNPNNPTGTYFNHESLDSFLSQVPPHVPVIIDEAYFEFVTAEDYPDTLALQQKYDNAFLLRTFSKAYGLAGLRVGYVVASEHAIEKWNIIRPPFNVTRISEYAAVAALEDQQYLKEVTHKNSVERERFYQLPQSKHFLPSQTNFIFVKTKRVNELYEALLNVGCITRPFPTGVRITIGFKEQNDKMLEVLSNFKYE</sequence>
<name>HIS8_STAAB</name>
<feature type="chain" id="PRO_0000230224" description="Histidinol-phosphate aminotransferase">
    <location>
        <begin position="1"/>
        <end position="352"/>
    </location>
</feature>
<feature type="modified residue" description="N6-(pyridoxal phosphate)lysine" evidence="1">
    <location>
        <position position="221"/>
    </location>
</feature>
<dbReference type="EC" id="2.6.1.9" evidence="1"/>
<dbReference type="EMBL" id="AJ938182">
    <property type="protein sequence ID" value="CAI80361.1"/>
    <property type="molecule type" value="Genomic_DNA"/>
</dbReference>
<dbReference type="RefSeq" id="WP_000663036.1">
    <property type="nucleotide sequence ID" value="NC_007622.1"/>
</dbReference>
<dbReference type="SMR" id="Q2YSI3"/>
<dbReference type="KEGG" id="sab:SAB0673"/>
<dbReference type="HOGENOM" id="CLU_017584_3_3_9"/>
<dbReference type="UniPathway" id="UPA00031">
    <property type="reaction ID" value="UER00012"/>
</dbReference>
<dbReference type="GO" id="GO:0004400">
    <property type="term" value="F:histidinol-phosphate transaminase activity"/>
    <property type="evidence" value="ECO:0007669"/>
    <property type="project" value="UniProtKB-UniRule"/>
</dbReference>
<dbReference type="GO" id="GO:0030170">
    <property type="term" value="F:pyridoxal phosphate binding"/>
    <property type="evidence" value="ECO:0007669"/>
    <property type="project" value="InterPro"/>
</dbReference>
<dbReference type="GO" id="GO:0000105">
    <property type="term" value="P:L-histidine biosynthetic process"/>
    <property type="evidence" value="ECO:0007669"/>
    <property type="project" value="UniProtKB-UniRule"/>
</dbReference>
<dbReference type="CDD" id="cd00609">
    <property type="entry name" value="AAT_like"/>
    <property type="match status" value="1"/>
</dbReference>
<dbReference type="Gene3D" id="3.90.1150.10">
    <property type="entry name" value="Aspartate Aminotransferase, domain 1"/>
    <property type="match status" value="1"/>
</dbReference>
<dbReference type="Gene3D" id="3.40.640.10">
    <property type="entry name" value="Type I PLP-dependent aspartate aminotransferase-like (Major domain)"/>
    <property type="match status" value="1"/>
</dbReference>
<dbReference type="HAMAP" id="MF_01023">
    <property type="entry name" value="HisC_aminotrans_2"/>
    <property type="match status" value="1"/>
</dbReference>
<dbReference type="InterPro" id="IPR001917">
    <property type="entry name" value="Aminotrans_II_pyridoxalP_BS"/>
</dbReference>
<dbReference type="InterPro" id="IPR004839">
    <property type="entry name" value="Aminotransferase_I/II_large"/>
</dbReference>
<dbReference type="InterPro" id="IPR005861">
    <property type="entry name" value="HisP_aminotrans"/>
</dbReference>
<dbReference type="InterPro" id="IPR050106">
    <property type="entry name" value="HistidinolP_aminotransfase"/>
</dbReference>
<dbReference type="InterPro" id="IPR015424">
    <property type="entry name" value="PyrdxlP-dep_Trfase"/>
</dbReference>
<dbReference type="InterPro" id="IPR015421">
    <property type="entry name" value="PyrdxlP-dep_Trfase_major"/>
</dbReference>
<dbReference type="InterPro" id="IPR015422">
    <property type="entry name" value="PyrdxlP-dep_Trfase_small"/>
</dbReference>
<dbReference type="NCBIfam" id="TIGR01141">
    <property type="entry name" value="hisC"/>
    <property type="match status" value="1"/>
</dbReference>
<dbReference type="PANTHER" id="PTHR43643:SF3">
    <property type="entry name" value="HISTIDINOL-PHOSPHATE AMINOTRANSFERASE"/>
    <property type="match status" value="1"/>
</dbReference>
<dbReference type="PANTHER" id="PTHR43643">
    <property type="entry name" value="HISTIDINOL-PHOSPHATE AMINOTRANSFERASE 2"/>
    <property type="match status" value="1"/>
</dbReference>
<dbReference type="Pfam" id="PF00155">
    <property type="entry name" value="Aminotran_1_2"/>
    <property type="match status" value="1"/>
</dbReference>
<dbReference type="SUPFAM" id="SSF53383">
    <property type="entry name" value="PLP-dependent transferases"/>
    <property type="match status" value="1"/>
</dbReference>
<dbReference type="PROSITE" id="PS00599">
    <property type="entry name" value="AA_TRANSFER_CLASS_2"/>
    <property type="match status" value="1"/>
</dbReference>
<organism>
    <name type="scientific">Staphylococcus aureus (strain bovine RF122 / ET3-1)</name>
    <dbReference type="NCBI Taxonomy" id="273036"/>
    <lineage>
        <taxon>Bacteria</taxon>
        <taxon>Bacillati</taxon>
        <taxon>Bacillota</taxon>
        <taxon>Bacilli</taxon>
        <taxon>Bacillales</taxon>
        <taxon>Staphylococcaceae</taxon>
        <taxon>Staphylococcus</taxon>
    </lineage>
</organism>
<reference key="1">
    <citation type="journal article" date="2007" name="PLoS ONE">
        <title>Molecular correlates of host specialization in Staphylococcus aureus.</title>
        <authorList>
            <person name="Herron-Olson L."/>
            <person name="Fitzgerald J.R."/>
            <person name="Musser J.M."/>
            <person name="Kapur V."/>
        </authorList>
    </citation>
    <scope>NUCLEOTIDE SEQUENCE [LARGE SCALE GENOMIC DNA]</scope>
    <source>
        <strain>bovine RF122 / ET3-1</strain>
    </source>
</reference>
<gene>
    <name evidence="1" type="primary">hisC</name>
    <name type="ordered locus">SAB0673</name>
</gene>
<evidence type="ECO:0000255" key="1">
    <source>
        <dbReference type="HAMAP-Rule" id="MF_01023"/>
    </source>
</evidence>
<proteinExistence type="inferred from homology"/>
<keyword id="KW-0028">Amino-acid biosynthesis</keyword>
<keyword id="KW-0032">Aminotransferase</keyword>
<keyword id="KW-0368">Histidine biosynthesis</keyword>
<keyword id="KW-0663">Pyridoxal phosphate</keyword>
<keyword id="KW-0808">Transferase</keyword>